<gene>
    <name type="primary">RRP36</name>
    <name type="ORF">PADG_06264</name>
</gene>
<protein>
    <recommendedName>
        <fullName>rRNA biogenesis protein RRP36</fullName>
    </recommendedName>
    <alternativeName>
        <fullName>Ribosomal RNA-processing protein 36</fullName>
    </alternativeName>
</protein>
<feature type="chain" id="PRO_0000397646" description="rRNA biogenesis protein RRP36">
    <location>
        <begin position="1"/>
        <end position="342"/>
    </location>
</feature>
<feature type="region of interest" description="Disordered" evidence="3">
    <location>
        <begin position="1"/>
        <end position="81"/>
    </location>
</feature>
<feature type="region of interest" description="Disordered" evidence="3">
    <location>
        <begin position="93"/>
        <end position="177"/>
    </location>
</feature>
<feature type="region of interest" description="Disordered" evidence="3">
    <location>
        <begin position="309"/>
        <end position="342"/>
    </location>
</feature>
<feature type="coiled-coil region" evidence="2">
    <location>
        <begin position="213"/>
        <end position="267"/>
    </location>
</feature>
<feature type="compositionally biased region" description="Acidic residues" evidence="3">
    <location>
        <begin position="33"/>
        <end position="53"/>
    </location>
</feature>
<feature type="compositionally biased region" description="Acidic residues" evidence="3">
    <location>
        <begin position="60"/>
        <end position="71"/>
    </location>
</feature>
<feature type="compositionally biased region" description="Basic and acidic residues" evidence="3">
    <location>
        <begin position="309"/>
        <end position="319"/>
    </location>
</feature>
<feature type="compositionally biased region" description="Basic and acidic residues" evidence="3">
    <location>
        <begin position="327"/>
        <end position="342"/>
    </location>
</feature>
<name>RRP36_PARBD</name>
<proteinExistence type="inferred from homology"/>
<keyword id="KW-0175">Coiled coil</keyword>
<keyword id="KW-0539">Nucleus</keyword>
<keyword id="KW-1185">Reference proteome</keyword>
<keyword id="KW-0687">Ribonucleoprotein</keyword>
<keyword id="KW-0690">Ribosome biogenesis</keyword>
<keyword id="KW-0698">rRNA processing</keyword>
<sequence>MPILSKLNKRVRARVEEDDFEHFSQESASDGSELGEEDEETDDSDGSTSESDDGSGRDGDESENEDLESDSASDANSDITSSLNNISFGALAKAQASLGKRKRSTTLTADIASKRPKGPSRSPPAPSSKEDQKYPNATKPPQKLSHRTSKHAPTIQSSRHAVTRKRTVIETPAIPQARDPRFDSVVLNHSTNGNPSIATNATIHASKNYAFLNSYRTEELSQLRKRLQNLQREKSKDTHDEREIERLKRQITSMSDRMQTFERKEMEREVLAGHRRKEREAIREGKKSQPWFLKKGDVKREVVTRRFTEMSGKEKQRALERRRKKIASKEKKEMPWARRGVE</sequence>
<evidence type="ECO:0000250" key="1"/>
<evidence type="ECO:0000255" key="2"/>
<evidence type="ECO:0000256" key="3">
    <source>
        <dbReference type="SAM" id="MobiDB-lite"/>
    </source>
</evidence>
<evidence type="ECO:0000305" key="4"/>
<organism>
    <name type="scientific">Paracoccidioides brasiliensis (strain Pb18)</name>
    <dbReference type="NCBI Taxonomy" id="502780"/>
    <lineage>
        <taxon>Eukaryota</taxon>
        <taxon>Fungi</taxon>
        <taxon>Dikarya</taxon>
        <taxon>Ascomycota</taxon>
        <taxon>Pezizomycotina</taxon>
        <taxon>Eurotiomycetes</taxon>
        <taxon>Eurotiomycetidae</taxon>
        <taxon>Onygenales</taxon>
        <taxon>Ajellomycetaceae</taxon>
        <taxon>Paracoccidioides</taxon>
    </lineage>
</organism>
<reference key="1">
    <citation type="journal article" date="2011" name="PLoS Genet.">
        <title>Comparative genomic analysis of human fungal pathogens causing paracoccidioidomycosis.</title>
        <authorList>
            <person name="Desjardins C.A."/>
            <person name="Champion M.D."/>
            <person name="Holder J.W."/>
            <person name="Muszewska A."/>
            <person name="Goldberg J."/>
            <person name="Bailao A.M."/>
            <person name="Brigido M.M."/>
            <person name="Ferreira M.E."/>
            <person name="Garcia A.M."/>
            <person name="Grynberg M."/>
            <person name="Gujja S."/>
            <person name="Heiman D.I."/>
            <person name="Henn M.R."/>
            <person name="Kodira C.D."/>
            <person name="Leon-Narvaez H."/>
            <person name="Longo L.V.G."/>
            <person name="Ma L.-J."/>
            <person name="Malavazi I."/>
            <person name="Matsuo A.L."/>
            <person name="Morais F.V."/>
            <person name="Pereira M."/>
            <person name="Rodriguez-Brito S."/>
            <person name="Sakthikumar S."/>
            <person name="Salem-Izacc S.M."/>
            <person name="Sykes S.M."/>
            <person name="Teixeira M.M."/>
            <person name="Vallejo M.C."/>
            <person name="Walter M.E."/>
            <person name="Yandava C."/>
            <person name="Young S."/>
            <person name="Zeng Q."/>
            <person name="Zucker J."/>
            <person name="Felipe M.S."/>
            <person name="Goldman G.H."/>
            <person name="Haas B.J."/>
            <person name="McEwen J.G."/>
            <person name="Nino-Vega G."/>
            <person name="Puccia R."/>
            <person name="San-Blas G."/>
            <person name="Soares C.M."/>
            <person name="Birren B.W."/>
            <person name="Cuomo C.A."/>
        </authorList>
    </citation>
    <scope>NUCLEOTIDE SEQUENCE [LARGE SCALE GENOMIC DNA]</scope>
    <source>
        <strain>Pb18</strain>
    </source>
</reference>
<accession>C1GG27</accession>
<dbReference type="EMBL" id="KN275964">
    <property type="protein sequence ID" value="EEH50185.1"/>
    <property type="molecule type" value="Genomic_DNA"/>
</dbReference>
<dbReference type="RefSeq" id="XP_010761830.1">
    <property type="nucleotide sequence ID" value="XM_010763528.1"/>
</dbReference>
<dbReference type="SMR" id="C1GG27"/>
<dbReference type="FunCoup" id="C1GG27">
    <property type="interactions" value="513"/>
</dbReference>
<dbReference type="STRING" id="502780.C1GG27"/>
<dbReference type="GeneID" id="22585030"/>
<dbReference type="KEGG" id="pbn:PADG_06264"/>
<dbReference type="VEuPathDB" id="FungiDB:PADG_06264"/>
<dbReference type="eggNOG" id="KOG3190">
    <property type="taxonomic scope" value="Eukaryota"/>
</dbReference>
<dbReference type="HOGENOM" id="CLU_048802_0_0_1"/>
<dbReference type="InParanoid" id="C1GG27"/>
<dbReference type="OMA" id="ERKEMPW"/>
<dbReference type="OrthoDB" id="36892at33183"/>
<dbReference type="Proteomes" id="UP000001628">
    <property type="component" value="Unassembled WGS sequence"/>
</dbReference>
<dbReference type="GO" id="GO:0030686">
    <property type="term" value="C:90S preribosome"/>
    <property type="evidence" value="ECO:0007669"/>
    <property type="project" value="TreeGrafter"/>
</dbReference>
<dbReference type="GO" id="GO:0005730">
    <property type="term" value="C:nucleolus"/>
    <property type="evidence" value="ECO:0007669"/>
    <property type="project" value="UniProtKB-SubCell"/>
</dbReference>
<dbReference type="GO" id="GO:0000462">
    <property type="term" value="P:maturation of SSU-rRNA from tricistronic rRNA transcript (SSU-rRNA, 5.8S rRNA, LSU-rRNA)"/>
    <property type="evidence" value="ECO:0007669"/>
    <property type="project" value="TreeGrafter"/>
</dbReference>
<dbReference type="InterPro" id="IPR009292">
    <property type="entry name" value="RRP36"/>
</dbReference>
<dbReference type="PANTHER" id="PTHR21738">
    <property type="entry name" value="RIBOSOMAL RNA PROCESSING PROTEIN 36 HOMOLOG"/>
    <property type="match status" value="1"/>
</dbReference>
<dbReference type="PANTHER" id="PTHR21738:SF0">
    <property type="entry name" value="RIBOSOMAL RNA PROCESSING PROTEIN 36 HOMOLOG"/>
    <property type="match status" value="1"/>
</dbReference>
<dbReference type="Pfam" id="PF06102">
    <property type="entry name" value="RRP36"/>
    <property type="match status" value="1"/>
</dbReference>
<comment type="function">
    <text evidence="1">Component of the 90S pre-ribosome involved in the maturation of rRNAs. Required for early cleavages of the pre-RNAs in the 40S ribosomal subunit maturation pathway (By similarity).</text>
</comment>
<comment type="subunit">
    <text evidence="1">Associates with 90S and pre-40S pre-ribosomal particles.</text>
</comment>
<comment type="subcellular location">
    <subcellularLocation>
        <location evidence="1">Nucleus</location>
        <location evidence="1">Nucleolus</location>
    </subcellularLocation>
</comment>
<comment type="similarity">
    <text evidence="4">Belongs to the RRP36 family.</text>
</comment>